<accession>B8DUM8</accession>
<organism>
    <name type="scientific">Bifidobacterium animalis subsp. lactis (strain AD011)</name>
    <dbReference type="NCBI Taxonomy" id="442563"/>
    <lineage>
        <taxon>Bacteria</taxon>
        <taxon>Bacillati</taxon>
        <taxon>Actinomycetota</taxon>
        <taxon>Actinomycetes</taxon>
        <taxon>Bifidobacteriales</taxon>
        <taxon>Bifidobacteriaceae</taxon>
        <taxon>Bifidobacterium</taxon>
    </lineage>
</organism>
<comment type="function">
    <text evidence="1">Single strand-specific metallo-endoribonuclease involved in late-stage 70S ribosome quality control and in maturation of the 3' terminus of the 16S rRNA.</text>
</comment>
<comment type="cofactor">
    <cofactor evidence="1">
        <name>Zn(2+)</name>
        <dbReference type="ChEBI" id="CHEBI:29105"/>
    </cofactor>
    <text evidence="1">Binds 1 zinc ion.</text>
</comment>
<comment type="subcellular location">
    <subcellularLocation>
        <location evidence="1">Cytoplasm</location>
    </subcellularLocation>
</comment>
<comment type="similarity">
    <text evidence="1">Belongs to the endoribonuclease YbeY family.</text>
</comment>
<dbReference type="EC" id="3.1.-.-" evidence="1"/>
<dbReference type="EMBL" id="CP001213">
    <property type="protein sequence ID" value="ACL29707.1"/>
    <property type="molecule type" value="Genomic_DNA"/>
</dbReference>
<dbReference type="RefSeq" id="WP_004217852.1">
    <property type="nucleotide sequence ID" value="NC_011835.1"/>
</dbReference>
<dbReference type="SMR" id="B8DUM8"/>
<dbReference type="STRING" id="442563.BLA_1422"/>
<dbReference type="GeneID" id="29696575"/>
<dbReference type="KEGG" id="bla:BLA_1422"/>
<dbReference type="PATRIC" id="fig|442563.4.peg.1486"/>
<dbReference type="HOGENOM" id="CLU_106710_3_2_11"/>
<dbReference type="Proteomes" id="UP000002456">
    <property type="component" value="Chromosome"/>
</dbReference>
<dbReference type="GO" id="GO:0005737">
    <property type="term" value="C:cytoplasm"/>
    <property type="evidence" value="ECO:0007669"/>
    <property type="project" value="UniProtKB-SubCell"/>
</dbReference>
<dbReference type="GO" id="GO:0004222">
    <property type="term" value="F:metalloendopeptidase activity"/>
    <property type="evidence" value="ECO:0007669"/>
    <property type="project" value="InterPro"/>
</dbReference>
<dbReference type="GO" id="GO:0004521">
    <property type="term" value="F:RNA endonuclease activity"/>
    <property type="evidence" value="ECO:0007669"/>
    <property type="project" value="UniProtKB-UniRule"/>
</dbReference>
<dbReference type="GO" id="GO:0008270">
    <property type="term" value="F:zinc ion binding"/>
    <property type="evidence" value="ECO:0007669"/>
    <property type="project" value="UniProtKB-UniRule"/>
</dbReference>
<dbReference type="GO" id="GO:0006364">
    <property type="term" value="P:rRNA processing"/>
    <property type="evidence" value="ECO:0007669"/>
    <property type="project" value="UniProtKB-UniRule"/>
</dbReference>
<dbReference type="Gene3D" id="3.40.390.30">
    <property type="entry name" value="Metalloproteases ('zincins'), catalytic domain"/>
    <property type="match status" value="1"/>
</dbReference>
<dbReference type="HAMAP" id="MF_00009">
    <property type="entry name" value="Endoribonucl_YbeY"/>
    <property type="match status" value="1"/>
</dbReference>
<dbReference type="InterPro" id="IPR023091">
    <property type="entry name" value="MetalPrtase_cat_dom_sf_prd"/>
</dbReference>
<dbReference type="InterPro" id="IPR002036">
    <property type="entry name" value="YbeY"/>
</dbReference>
<dbReference type="InterPro" id="IPR020549">
    <property type="entry name" value="YbeY_CS"/>
</dbReference>
<dbReference type="NCBIfam" id="TIGR00043">
    <property type="entry name" value="rRNA maturation RNase YbeY"/>
    <property type="match status" value="1"/>
</dbReference>
<dbReference type="PANTHER" id="PTHR46986">
    <property type="entry name" value="ENDORIBONUCLEASE YBEY, CHLOROPLASTIC"/>
    <property type="match status" value="1"/>
</dbReference>
<dbReference type="PANTHER" id="PTHR46986:SF1">
    <property type="entry name" value="ENDORIBONUCLEASE YBEY, CHLOROPLASTIC"/>
    <property type="match status" value="1"/>
</dbReference>
<dbReference type="Pfam" id="PF02130">
    <property type="entry name" value="YbeY"/>
    <property type="match status" value="1"/>
</dbReference>
<dbReference type="SUPFAM" id="SSF55486">
    <property type="entry name" value="Metalloproteases ('zincins'), catalytic domain"/>
    <property type="match status" value="1"/>
</dbReference>
<dbReference type="PROSITE" id="PS01306">
    <property type="entry name" value="UPF0054"/>
    <property type="match status" value="1"/>
</dbReference>
<reference key="1">
    <citation type="journal article" date="2009" name="J. Bacteriol.">
        <title>Genome sequence of the probiotic bacterium Bifidobacterium animalis subsp. lactis AD011.</title>
        <authorList>
            <person name="Kim J.F."/>
            <person name="Jeong H."/>
            <person name="Yu D.S."/>
            <person name="Choi S.-H."/>
            <person name="Hur C.-G."/>
            <person name="Park M.-S."/>
            <person name="Yoon S.H."/>
            <person name="Kim D.-W."/>
            <person name="Ji G.E."/>
            <person name="Park H.-S."/>
            <person name="Oh T.K."/>
        </authorList>
    </citation>
    <scope>NUCLEOTIDE SEQUENCE [LARGE SCALE GENOMIC DNA]</scope>
    <source>
        <strain>AD011</strain>
    </source>
</reference>
<feature type="chain" id="PRO_1000199954" description="Endoribonuclease YbeY">
    <location>
        <begin position="1"/>
        <end position="181"/>
    </location>
</feature>
<feature type="binding site" evidence="1">
    <location>
        <position position="115"/>
    </location>
    <ligand>
        <name>Zn(2+)</name>
        <dbReference type="ChEBI" id="CHEBI:29105"/>
        <note>catalytic</note>
    </ligand>
</feature>
<feature type="binding site" evidence="1">
    <location>
        <position position="119"/>
    </location>
    <ligand>
        <name>Zn(2+)</name>
        <dbReference type="ChEBI" id="CHEBI:29105"/>
        <note>catalytic</note>
    </ligand>
</feature>
<feature type="binding site" evidence="1">
    <location>
        <position position="125"/>
    </location>
    <ligand>
        <name>Zn(2+)</name>
        <dbReference type="ChEBI" id="CHEBI:29105"/>
        <note>catalytic</note>
    </ligand>
</feature>
<proteinExistence type="inferred from homology"/>
<name>YBEY_BIFA0</name>
<protein>
    <recommendedName>
        <fullName evidence="1">Endoribonuclease YbeY</fullName>
        <ecNumber evidence="1">3.1.-.-</ecNumber>
    </recommendedName>
</protein>
<evidence type="ECO:0000255" key="1">
    <source>
        <dbReference type="HAMAP-Rule" id="MF_00009"/>
    </source>
</evidence>
<keyword id="KW-0963">Cytoplasm</keyword>
<keyword id="KW-0255">Endonuclease</keyword>
<keyword id="KW-0378">Hydrolase</keyword>
<keyword id="KW-0479">Metal-binding</keyword>
<keyword id="KW-0540">Nuclease</keyword>
<keyword id="KW-1185">Reference proteome</keyword>
<keyword id="KW-0690">Ribosome biogenesis</keyword>
<keyword id="KW-0698">rRNA processing</keyword>
<keyword id="KW-0862">Zinc</keyword>
<gene>
    <name evidence="1" type="primary">ybeY</name>
    <name type="ordered locus">BLA_1422</name>
</gene>
<sequence>MSVEVANETEWQLDPKVFSELGLWVMHQMRVSTQSELTITFVDPEPIAELHERWMDLQGPTDVMSFPMDELRPGDERNEPEGMLGDIVICPWVAQQQAQAAGHSTMEEMMLLTIHGVLHLLGYDHHTREQERQMFGLQRQLLLTFFALHHGTAWSATLPSGSVNELEVYERKYGTNRELGH</sequence>